<sequence length="1613" mass="183519">MLHVAQEEARLDLLKQLKERLQSRLDKDKAAEVDTFAHLFYAAVPLEDLADRRLDDLYGATLSVWHFIQQFDPEAPKVRVLNPDFEEHGWQSTHTFIAVLHEDMPFLVDSVRVELNRRGMTVHAIHNAVLAVGRDDEHRLQRVASPEETDAPEARESLIAIEVDRHSNPAELEEIEASLLEVLREVRTAVSDFDPMRAQARAAIEELEATRPAQVDPADHREAIEFLQWLLQDNFTFLGYDEYEVREDQGRQRLDKVQNSELGVFRLDQPRYRERIRTDLGVEGDHYVPMPQLMSFAKSAHHARIHRPTYPDYISIDRYDDQGRVIGERRFLGMFTATVYNESPRNVPILRRKLQAVMDIAGFSPKGHNGKQLLQILEVYPRDDLFQIDIEELAQTALGILDIRERRRVRLFIREDTFGKFYSCLVFVPRDVFSTELRVRLQELLCEELDATFGDFNTYLSESVLARIQFILRFNGEKPVEYDIKRLEEKLVKLARNWRDDLLNASIEGFGEESANLLMSRFRDAFPASYREDFSARTAVYDLQHIGELDEGAPLALSLYRLIEEEGSGVNLKLFHRGAPIPLSDVLPMMENLGLRVIGERPYEVQASDASYWIHDFNLEHHTSVEMNLQEMRGPFIEAFQRIWAGEADNDAFNRLIIGANLDWREVAMLRAYARYLKQIRFGMSQDYIATTLGSHPEITRELVSLFELRFDPAERPGEGDIEECESRILTLLDEVPSLNDDQLLRRYMELIKATLRTNYYQRTEEGRYKDYLAFKLDPSQVSGIPKPCPAYEIFVCSPRVEGVHLRGGKVARGGLRWSDRHEDFRTEVLGLVKAQQVKNAVIVPMGAKGGFVCKRMPEGADREATQKEGIACYQIFIRALLDVTDNLVGGEVVPPRDVVRHDDNDPYLVVAADKGTATFSDIANEISTEYGHWLGDAFASGGANGYDHKKMAITAKGAWESVKRHFRGLGVNTQEDEFSVVGIGDMAGDVFGNGMLLSDKIRLVGAFNHLHIFVDPTPDAAASFAERQRLFDMPRSSWEDYNTELISEGGGIFPRSAKSITITPQMKKVFGIREDKLSPNELIRAMLVSKVDLVWNGGIGTYVKSSEETDAEVGDKANDALRIDGRELNCRVVGEGGNLGLTQRGRMEAAAKGVRVNTDFIDNAGGVNCSDHEVNIKILIDEVVSRGDLTEKQRNQLLADMTDEVSELVLLDNYRQTQALDLAELLSRQGIGPYRRFISELEAAGQIDRELEFLPSDEELLERTQHNQGMTLPELSVLISYAKSVLKGDLIASDVPDDPTIMRFVERVFPSMLAERYRDEMYEHRLKREIVATQVANDLVDYMGVVFVRRLMDSTGADRADIARAYVIARDSFQLPRLWEQIEALDNKVPSQVQYSMMLDLMRMLRRSTRWFLRQRTGMSTRDTIDYFAPRLAQLQENIGKRLRGEEQEQWSARRQELVKAGVPEALASTVAAAGSLYAALGIIQTARQTDEKPQRVAEIFYEVGARLELPWIIQQVTRLEVRDGWQAKARDTFRDDIDRQQLALTASVLGMDGGPRDSAERVDRWLSLHEGMHQRWRHLLEEVGSGSQGGFPLFAVAVRELVDLAESNSEA</sequence>
<reference key="1">
    <citation type="journal article" date="2011" name="Environ. Microbiol.">
        <title>A blueprint of ectoine metabolism from the genome of the industrial producer Halomonas elongata DSM 2581(T).</title>
        <authorList>
            <person name="Schwibbert K."/>
            <person name="Marin-Sanguino A."/>
            <person name="Bagyan I."/>
            <person name="Heidrich G."/>
            <person name="Lentzen G."/>
            <person name="Seitz H."/>
            <person name="Rampp M."/>
            <person name="Schuster S.C."/>
            <person name="Klenk H.P."/>
            <person name="Pfeiffer F."/>
            <person name="Oesterhelt D."/>
            <person name="Kunte H.J."/>
        </authorList>
    </citation>
    <scope>NUCLEOTIDE SEQUENCE [LARGE SCALE GENOMIC DNA]</scope>
    <source>
        <strain>ATCC 33173 / DSM 2581 / NBRC 15536 / NCIMB 2198 / 1H9</strain>
    </source>
</reference>
<reference key="2">
    <citation type="journal article" date="2017" name="PLoS ONE">
        <title>Osmoregulation in the halophilic bacterium Halomonas elongata: a case study for integrative systems biology.</title>
        <authorList>
            <person name="Kindzierski V."/>
            <person name="Raschke S."/>
            <person name="Knabe N."/>
            <person name="Siedler F."/>
            <person name="Scheffer B."/>
            <person name="Pflueger-Grau K."/>
            <person name="Pfeiffer F."/>
            <person name="Oesterhelt D."/>
            <person name="Marin-Sanguino A."/>
            <person name="Kunte H.J."/>
        </authorList>
    </citation>
    <scope>CATALYTIC ACTIVITY</scope>
    <source>
        <strain>ATCC 33173 / DSM 2581 / NBRC 15536 / NCIMB 2198 / 1H9</strain>
    </source>
</reference>
<proteinExistence type="evidence at protein level"/>
<name>DHE2_HALED</name>
<protein>
    <recommendedName>
        <fullName evidence="2">NAD-specific glutamate dehydrogenase</fullName>
        <shortName evidence="2">NAD-GDH</shortName>
        <ecNumber evidence="3">1.4.1.2</ecNumber>
    </recommendedName>
    <alternativeName>
        <fullName evidence="2">NAD(+)-dependent glutamate dehydrogenase</fullName>
    </alternativeName>
</protein>
<gene>
    <name evidence="4" type="primary">gdh</name>
    <name evidence="6" type="ordered locus">HELO_3049</name>
</gene>
<evidence type="ECO:0000250" key="1"/>
<evidence type="ECO:0000250" key="2">
    <source>
        <dbReference type="UniProtKB" id="Q9HZE0"/>
    </source>
</evidence>
<evidence type="ECO:0000269" key="3">
    <source>
    </source>
</evidence>
<evidence type="ECO:0000303" key="4">
    <source>
    </source>
</evidence>
<evidence type="ECO:0000305" key="5"/>
<evidence type="ECO:0000312" key="6">
    <source>
        <dbReference type="EMBL" id="CBV42933.1"/>
    </source>
</evidence>
<organism>
    <name type="scientific">Halomonas elongata (strain ATCC 33173 / DSM 2581 / NBRC 15536 / NCIMB 2198 / 1H9)</name>
    <dbReference type="NCBI Taxonomy" id="768066"/>
    <lineage>
        <taxon>Bacteria</taxon>
        <taxon>Pseudomonadati</taxon>
        <taxon>Pseudomonadota</taxon>
        <taxon>Gammaproteobacteria</taxon>
        <taxon>Oceanospirillales</taxon>
        <taxon>Halomonadaceae</taxon>
        <taxon>Halomonas</taxon>
    </lineage>
</organism>
<dbReference type="EC" id="1.4.1.2" evidence="3"/>
<dbReference type="EMBL" id="FN869568">
    <property type="protein sequence ID" value="CBV42933.1"/>
    <property type="molecule type" value="Genomic_DNA"/>
</dbReference>
<dbReference type="RefSeq" id="WP_013332805.1">
    <property type="nucleotide sequence ID" value="NC_014532.2"/>
</dbReference>
<dbReference type="SMR" id="E1V4J5"/>
<dbReference type="STRING" id="768066.HELO_3049"/>
<dbReference type="GeneID" id="91010413"/>
<dbReference type="KEGG" id="hel:HELO_3049"/>
<dbReference type="eggNOG" id="COG2902">
    <property type="taxonomic scope" value="Bacteria"/>
</dbReference>
<dbReference type="HOGENOM" id="CLU_003404_1_1_6"/>
<dbReference type="OrthoDB" id="9758052at2"/>
<dbReference type="Proteomes" id="UP000008707">
    <property type="component" value="Chromosome"/>
</dbReference>
<dbReference type="GO" id="GO:0004352">
    <property type="term" value="F:glutamate dehydrogenase (NAD+) activity"/>
    <property type="evidence" value="ECO:0007669"/>
    <property type="project" value="UniProtKB-EC"/>
</dbReference>
<dbReference type="GO" id="GO:0004069">
    <property type="term" value="F:L-aspartate:2-oxoglutarate aminotransferase activity"/>
    <property type="evidence" value="ECO:0007669"/>
    <property type="project" value="InterPro"/>
</dbReference>
<dbReference type="GO" id="GO:0006538">
    <property type="term" value="P:glutamate catabolic process"/>
    <property type="evidence" value="ECO:0007669"/>
    <property type="project" value="InterPro"/>
</dbReference>
<dbReference type="Gene3D" id="3.40.50.720">
    <property type="entry name" value="NAD(P)-binding Rossmann-like Domain"/>
    <property type="match status" value="1"/>
</dbReference>
<dbReference type="InterPro" id="IPR046346">
    <property type="entry name" value="Aminoacid_DH-like_N_sf"/>
</dbReference>
<dbReference type="InterPro" id="IPR048381">
    <property type="entry name" value="GDH_C"/>
</dbReference>
<dbReference type="InterPro" id="IPR036291">
    <property type="entry name" value="NAD(P)-bd_dom_sf"/>
</dbReference>
<dbReference type="InterPro" id="IPR028971">
    <property type="entry name" value="NAD-GDH_cat"/>
</dbReference>
<dbReference type="InterPro" id="IPR049062">
    <property type="entry name" value="NAD_Glu_DH_ACT2"/>
</dbReference>
<dbReference type="InterPro" id="IPR049064">
    <property type="entry name" value="NAD_Glu_DH_ACT3"/>
</dbReference>
<dbReference type="InterPro" id="IPR007780">
    <property type="entry name" value="NAD_Glu_DH_bac"/>
</dbReference>
<dbReference type="InterPro" id="IPR049059">
    <property type="entry name" value="NAD_Glu_DH_HM1"/>
</dbReference>
<dbReference type="InterPro" id="IPR049058">
    <property type="entry name" value="NAD_Glu_DH_HM2"/>
</dbReference>
<dbReference type="InterPro" id="IPR049056">
    <property type="entry name" value="NAD_Glu_DH_HM3"/>
</dbReference>
<dbReference type="InterPro" id="IPR024727">
    <property type="entry name" value="NAD_Glu_DH_N_ACT1"/>
</dbReference>
<dbReference type="PANTHER" id="PTHR43403">
    <property type="entry name" value="NAD-SPECIFIC GLUTAMATE DEHYDROGENASE"/>
    <property type="match status" value="1"/>
</dbReference>
<dbReference type="PANTHER" id="PTHR43403:SF1">
    <property type="entry name" value="NAD-SPECIFIC GLUTAMATE DEHYDROGENASE"/>
    <property type="match status" value="1"/>
</dbReference>
<dbReference type="Pfam" id="PF05088">
    <property type="entry name" value="Bac_GDH_CD"/>
    <property type="match status" value="1"/>
</dbReference>
<dbReference type="Pfam" id="PF21075">
    <property type="entry name" value="GDH_ACT1"/>
    <property type="match status" value="1"/>
</dbReference>
<dbReference type="Pfam" id="PF21076">
    <property type="entry name" value="GDH_ACT2"/>
    <property type="match status" value="1"/>
</dbReference>
<dbReference type="Pfam" id="PF21077">
    <property type="entry name" value="GDH_ACT3"/>
    <property type="match status" value="1"/>
</dbReference>
<dbReference type="Pfam" id="PF21074">
    <property type="entry name" value="GDH_C"/>
    <property type="match status" value="1"/>
</dbReference>
<dbReference type="Pfam" id="PF21073">
    <property type="entry name" value="GDH_HM1"/>
    <property type="match status" value="1"/>
</dbReference>
<dbReference type="Pfam" id="PF21079">
    <property type="entry name" value="GDH_HM2"/>
    <property type="match status" value="1"/>
</dbReference>
<dbReference type="Pfam" id="PF21078">
    <property type="entry name" value="GDH_HM3"/>
    <property type="match status" value="1"/>
</dbReference>
<dbReference type="PIRSF" id="PIRSF036761">
    <property type="entry name" value="GDH_Mll4104"/>
    <property type="match status" value="1"/>
</dbReference>
<dbReference type="SUPFAM" id="SSF53223">
    <property type="entry name" value="Aminoacid dehydrogenase-like, N-terminal domain"/>
    <property type="match status" value="1"/>
</dbReference>
<dbReference type="SUPFAM" id="SSF51735">
    <property type="entry name" value="NAD(P)-binding Rossmann-fold domains"/>
    <property type="match status" value="1"/>
</dbReference>
<feature type="chain" id="PRO_0000439538" description="NAD-specific glutamate dehydrogenase">
    <location>
        <begin position="1"/>
        <end position="1613"/>
    </location>
</feature>
<feature type="active site" evidence="1">
    <location>
        <position position="849"/>
    </location>
</feature>
<keyword id="KW-0520">NAD</keyword>
<keyword id="KW-0560">Oxidoreductase</keyword>
<comment type="function">
    <text evidence="2">Involved in arginine catabolism by converting L-glutamate, into 2-oxoglutarate, which is then channeled into the tricarboxylic acid cycle.</text>
</comment>
<comment type="catalytic activity">
    <reaction evidence="3">
        <text>L-glutamate + NAD(+) + H2O = 2-oxoglutarate + NH4(+) + NADH + H(+)</text>
        <dbReference type="Rhea" id="RHEA:15133"/>
        <dbReference type="ChEBI" id="CHEBI:15377"/>
        <dbReference type="ChEBI" id="CHEBI:15378"/>
        <dbReference type="ChEBI" id="CHEBI:16810"/>
        <dbReference type="ChEBI" id="CHEBI:28938"/>
        <dbReference type="ChEBI" id="CHEBI:29985"/>
        <dbReference type="ChEBI" id="CHEBI:57540"/>
        <dbReference type="ChEBI" id="CHEBI:57945"/>
        <dbReference type="EC" id="1.4.1.2"/>
    </reaction>
</comment>
<comment type="similarity">
    <text evidence="5">Belongs to the Glu/Leu/Phe/Val dehydrogenases family.</text>
</comment>
<accession>E1V4J5</accession>